<dbReference type="EC" id="6.3.4.20" evidence="1"/>
<dbReference type="EMBL" id="CP000319">
    <property type="protein sequence ID" value="ABE62660.1"/>
    <property type="molecule type" value="Genomic_DNA"/>
</dbReference>
<dbReference type="RefSeq" id="WP_011510340.1">
    <property type="nucleotide sequence ID" value="NC_007964.1"/>
</dbReference>
<dbReference type="SMR" id="Q1QM87"/>
<dbReference type="STRING" id="323097.Nham_1846"/>
<dbReference type="KEGG" id="nha:Nham_1846"/>
<dbReference type="eggNOG" id="COG0603">
    <property type="taxonomic scope" value="Bacteria"/>
</dbReference>
<dbReference type="HOGENOM" id="CLU_081854_0_0_5"/>
<dbReference type="OrthoDB" id="9789567at2"/>
<dbReference type="UniPathway" id="UPA00391"/>
<dbReference type="Proteomes" id="UP000001953">
    <property type="component" value="Chromosome"/>
</dbReference>
<dbReference type="GO" id="GO:0005524">
    <property type="term" value="F:ATP binding"/>
    <property type="evidence" value="ECO:0007669"/>
    <property type="project" value="UniProtKB-UniRule"/>
</dbReference>
<dbReference type="GO" id="GO:0016879">
    <property type="term" value="F:ligase activity, forming carbon-nitrogen bonds"/>
    <property type="evidence" value="ECO:0007669"/>
    <property type="project" value="UniProtKB-UniRule"/>
</dbReference>
<dbReference type="GO" id="GO:0008270">
    <property type="term" value="F:zinc ion binding"/>
    <property type="evidence" value="ECO:0007669"/>
    <property type="project" value="UniProtKB-UniRule"/>
</dbReference>
<dbReference type="GO" id="GO:0008616">
    <property type="term" value="P:queuosine biosynthetic process"/>
    <property type="evidence" value="ECO:0007669"/>
    <property type="project" value="UniProtKB-UniRule"/>
</dbReference>
<dbReference type="CDD" id="cd01995">
    <property type="entry name" value="QueC-like"/>
    <property type="match status" value="1"/>
</dbReference>
<dbReference type="Gene3D" id="3.40.50.620">
    <property type="entry name" value="HUPs"/>
    <property type="match status" value="1"/>
</dbReference>
<dbReference type="HAMAP" id="MF_01633">
    <property type="entry name" value="QueC"/>
    <property type="match status" value="1"/>
</dbReference>
<dbReference type="InterPro" id="IPR018317">
    <property type="entry name" value="QueC"/>
</dbReference>
<dbReference type="InterPro" id="IPR014729">
    <property type="entry name" value="Rossmann-like_a/b/a_fold"/>
</dbReference>
<dbReference type="NCBIfam" id="TIGR00364">
    <property type="entry name" value="7-cyano-7-deazaguanine synthase QueC"/>
    <property type="match status" value="1"/>
</dbReference>
<dbReference type="PANTHER" id="PTHR42914">
    <property type="entry name" value="7-CYANO-7-DEAZAGUANINE SYNTHASE"/>
    <property type="match status" value="1"/>
</dbReference>
<dbReference type="PANTHER" id="PTHR42914:SF1">
    <property type="entry name" value="7-CYANO-7-DEAZAGUANINE SYNTHASE"/>
    <property type="match status" value="1"/>
</dbReference>
<dbReference type="Pfam" id="PF06508">
    <property type="entry name" value="QueC"/>
    <property type="match status" value="1"/>
</dbReference>
<dbReference type="PIRSF" id="PIRSF006293">
    <property type="entry name" value="ExsB"/>
    <property type="match status" value="1"/>
</dbReference>
<dbReference type="SUPFAM" id="SSF52402">
    <property type="entry name" value="Adenine nucleotide alpha hydrolases-like"/>
    <property type="match status" value="1"/>
</dbReference>
<sequence length="238" mass="26025">MTDQPVSRTALVLFSGGQDSATCLAWALQRFAHVETLGFDYGQRHAIELDCRDALLAGMTSLRPDWAEKLGEGHTLAIPTLAEISDTALTRNVAIEMGEGGLPNTFVPGRNLVFLTFAAALAYRRGMTDIVGGMCETDYSGYPDCRDDTIKALQTALNLGMDKQFELHTPLMWLDKAATWALAHELGGAGLVDLIREHSHTCYLGERGARHDWGYGCGECPACRLRAKGWCEYVARAV</sequence>
<evidence type="ECO:0000255" key="1">
    <source>
        <dbReference type="HAMAP-Rule" id="MF_01633"/>
    </source>
</evidence>
<accession>Q1QM87</accession>
<protein>
    <recommendedName>
        <fullName evidence="1">7-cyano-7-deazaguanine synthase</fullName>
        <ecNumber evidence="1">6.3.4.20</ecNumber>
    </recommendedName>
    <alternativeName>
        <fullName evidence="1">7-cyano-7-carbaguanine synthase</fullName>
    </alternativeName>
    <alternativeName>
        <fullName evidence="1">PreQ(0) synthase</fullName>
    </alternativeName>
    <alternativeName>
        <fullName evidence="1">Queuosine biosynthesis protein QueC</fullName>
    </alternativeName>
</protein>
<proteinExistence type="inferred from homology"/>
<feature type="chain" id="PRO_0000255925" description="7-cyano-7-deazaguanine synthase">
    <location>
        <begin position="1"/>
        <end position="238"/>
    </location>
</feature>
<feature type="binding site" evidence="1">
    <location>
        <begin position="14"/>
        <end position="24"/>
    </location>
    <ligand>
        <name>ATP</name>
        <dbReference type="ChEBI" id="CHEBI:30616"/>
    </ligand>
</feature>
<feature type="binding site" evidence="1">
    <location>
        <position position="202"/>
    </location>
    <ligand>
        <name>Zn(2+)</name>
        <dbReference type="ChEBI" id="CHEBI:29105"/>
    </ligand>
</feature>
<feature type="binding site" evidence="1">
    <location>
        <position position="217"/>
    </location>
    <ligand>
        <name>Zn(2+)</name>
        <dbReference type="ChEBI" id="CHEBI:29105"/>
    </ligand>
</feature>
<feature type="binding site" evidence="1">
    <location>
        <position position="220"/>
    </location>
    <ligand>
        <name>Zn(2+)</name>
        <dbReference type="ChEBI" id="CHEBI:29105"/>
    </ligand>
</feature>
<feature type="binding site" evidence="1">
    <location>
        <position position="223"/>
    </location>
    <ligand>
        <name>Zn(2+)</name>
        <dbReference type="ChEBI" id="CHEBI:29105"/>
    </ligand>
</feature>
<gene>
    <name evidence="1" type="primary">queC</name>
    <name type="ordered locus">Nham_1846</name>
</gene>
<name>QUEC_NITHX</name>
<reference key="1">
    <citation type="submission" date="2006-03" db="EMBL/GenBank/DDBJ databases">
        <title>Complete sequence of chromosome of Nitrobacter hamburgensis X14.</title>
        <authorList>
            <consortium name="US DOE Joint Genome Institute"/>
            <person name="Copeland A."/>
            <person name="Lucas S."/>
            <person name="Lapidus A."/>
            <person name="Barry K."/>
            <person name="Detter J.C."/>
            <person name="Glavina del Rio T."/>
            <person name="Hammon N."/>
            <person name="Israni S."/>
            <person name="Dalin E."/>
            <person name="Tice H."/>
            <person name="Pitluck S."/>
            <person name="Chain P."/>
            <person name="Malfatti S."/>
            <person name="Shin M."/>
            <person name="Vergez L."/>
            <person name="Schmutz J."/>
            <person name="Larimer F."/>
            <person name="Land M."/>
            <person name="Hauser L."/>
            <person name="Kyrpides N."/>
            <person name="Ivanova N."/>
            <person name="Ward B."/>
            <person name="Arp D."/>
            <person name="Klotz M."/>
            <person name="Stein L."/>
            <person name="O'Mullan G."/>
            <person name="Starkenburg S."/>
            <person name="Sayavedra L."/>
            <person name="Poret-Peterson A.T."/>
            <person name="Gentry M.E."/>
            <person name="Bruce D."/>
            <person name="Richardson P."/>
        </authorList>
    </citation>
    <scope>NUCLEOTIDE SEQUENCE [LARGE SCALE GENOMIC DNA]</scope>
    <source>
        <strain>DSM 10229 / NCIMB 13809 / X14</strain>
    </source>
</reference>
<organism>
    <name type="scientific">Nitrobacter hamburgensis (strain DSM 10229 / NCIMB 13809 / X14)</name>
    <dbReference type="NCBI Taxonomy" id="323097"/>
    <lineage>
        <taxon>Bacteria</taxon>
        <taxon>Pseudomonadati</taxon>
        <taxon>Pseudomonadota</taxon>
        <taxon>Alphaproteobacteria</taxon>
        <taxon>Hyphomicrobiales</taxon>
        <taxon>Nitrobacteraceae</taxon>
        <taxon>Nitrobacter</taxon>
    </lineage>
</organism>
<keyword id="KW-0067">ATP-binding</keyword>
<keyword id="KW-0436">Ligase</keyword>
<keyword id="KW-0479">Metal-binding</keyword>
<keyword id="KW-0547">Nucleotide-binding</keyword>
<keyword id="KW-0671">Queuosine biosynthesis</keyword>
<keyword id="KW-1185">Reference proteome</keyword>
<keyword id="KW-0862">Zinc</keyword>
<comment type="function">
    <text evidence="1">Catalyzes the ATP-dependent conversion of 7-carboxy-7-deazaguanine (CDG) to 7-cyano-7-deazaguanine (preQ(0)).</text>
</comment>
<comment type="catalytic activity">
    <reaction evidence="1">
        <text>7-carboxy-7-deazaguanine + NH4(+) + ATP = 7-cyano-7-deazaguanine + ADP + phosphate + H2O + H(+)</text>
        <dbReference type="Rhea" id="RHEA:27982"/>
        <dbReference type="ChEBI" id="CHEBI:15377"/>
        <dbReference type="ChEBI" id="CHEBI:15378"/>
        <dbReference type="ChEBI" id="CHEBI:28938"/>
        <dbReference type="ChEBI" id="CHEBI:30616"/>
        <dbReference type="ChEBI" id="CHEBI:43474"/>
        <dbReference type="ChEBI" id="CHEBI:45075"/>
        <dbReference type="ChEBI" id="CHEBI:61036"/>
        <dbReference type="ChEBI" id="CHEBI:456216"/>
        <dbReference type="EC" id="6.3.4.20"/>
    </reaction>
</comment>
<comment type="cofactor">
    <cofactor evidence="1">
        <name>Zn(2+)</name>
        <dbReference type="ChEBI" id="CHEBI:29105"/>
    </cofactor>
    <text evidence="1">Binds 1 zinc ion per subunit.</text>
</comment>
<comment type="pathway">
    <text evidence="1">Purine metabolism; 7-cyano-7-deazaguanine biosynthesis.</text>
</comment>
<comment type="similarity">
    <text evidence="1">Belongs to the QueC family.</text>
</comment>